<proteinExistence type="evidence at protein level"/>
<dbReference type="GO" id="GO:0005576">
    <property type="term" value="C:extracellular region"/>
    <property type="evidence" value="ECO:0007669"/>
    <property type="project" value="UniProtKB-SubCell"/>
</dbReference>
<dbReference type="GO" id="GO:0007218">
    <property type="term" value="P:neuropeptide signaling pathway"/>
    <property type="evidence" value="ECO:0007669"/>
    <property type="project" value="UniProtKB-KW"/>
</dbReference>
<feature type="peptide" id="PRO_0000421482" description="Extended FMRFamide-1" evidence="3">
    <location>
        <begin position="1"/>
        <end position="7"/>
    </location>
</feature>
<feature type="modified residue" description="Leucine amide" evidence="3">
    <location>
        <position position="7"/>
    </location>
</feature>
<feature type="unsure residue" description="L or I" evidence="3">
    <location>
        <position position="5"/>
    </location>
</feature>
<feature type="unsure residue" description="L or I" evidence="3">
    <location>
        <position position="7"/>
    </location>
</feature>
<evidence type="ECO:0000250" key="1">
    <source>
        <dbReference type="UniProtKB" id="P34405"/>
    </source>
</evidence>
<evidence type="ECO:0000255" key="2"/>
<evidence type="ECO:0000269" key="3">
    <source>
    </source>
</evidence>
<evidence type="ECO:0000303" key="4">
    <source>
    </source>
</evidence>
<evidence type="ECO:0000305" key="5"/>
<evidence type="ECO:0000305" key="6">
    <source>
    </source>
</evidence>
<sequence length="7" mass="834">AQSFLRL</sequence>
<accession>B3A0F8</accession>
<reference evidence="5" key="1">
    <citation type="journal article" date="2012" name="Syst. Biol.">
        <title>Peptidomics-based phylogeny and biogeography of Mantophasmatodea (Hexapoda).</title>
        <authorList>
            <person name="Predel R."/>
            <person name="Neupert S."/>
            <person name="Huetteroth W."/>
            <person name="Kahnt J."/>
            <person name="Waidelich D."/>
            <person name="Roth S."/>
        </authorList>
    </citation>
    <scope>PROTEIN SEQUENCE</scope>
    <scope>AMIDATION AT LEU-7</scope>
    <source>
        <tissue evidence="3">Thoracic perisympathetic organs</tissue>
    </source>
</reference>
<comment type="function">
    <text evidence="1">FMRFamides and FMRFamide-like peptides are neuropeptides.</text>
</comment>
<comment type="subcellular location">
    <subcellularLocation>
        <location evidence="6">Secreted</location>
    </subcellularLocation>
</comment>
<comment type="similarity">
    <text evidence="2">Belongs to the FARP (FMRF amide related peptide) family.</text>
</comment>
<organism>
    <name type="scientific">Praedatophasma maraisi</name>
    <name type="common">Gladiator</name>
    <name type="synonym">Heel-walker</name>
    <dbReference type="NCBI Taxonomy" id="409170"/>
    <lineage>
        <taxon>Eukaryota</taxon>
        <taxon>Metazoa</taxon>
        <taxon>Ecdysozoa</taxon>
        <taxon>Arthropoda</taxon>
        <taxon>Hexapoda</taxon>
        <taxon>Insecta</taxon>
        <taxon>Pterygota</taxon>
        <taxon>Neoptera</taxon>
        <taxon>Polyneoptera</taxon>
        <taxon>Mantophasmatodea</taxon>
        <taxon>Mantophasmatidae</taxon>
        <taxon>Praedatophasma</taxon>
    </lineage>
</organism>
<name>FAR1_PRAMA</name>
<keyword id="KW-0027">Amidation</keyword>
<keyword id="KW-0903">Direct protein sequencing</keyword>
<keyword id="KW-0527">Neuropeptide</keyword>
<keyword id="KW-0964">Secreted</keyword>
<protein>
    <recommendedName>
        <fullName evidence="4">Extended FMRFamide-1</fullName>
        <shortName evidence="4">FMRFa-1</shortName>
    </recommendedName>
</protein>